<sequence>MSRLRWLTAGESHGPALVATLEGLPAGVPITTEMVADHLARRRLGYGRGARMKFERDEVTFLGGVRHGLTMGSPVAVMVGNTEWPKWEQVMAADPVDPEVLAGLARNAPLTRPRPGHADLAGMQKYGFDEARPILERASARETAARVALGAVARSYLKETAGVEIVSHVVELASAKAPHGVYPTPADVERLDADPVRCLDADASKAMVAEIDQAHKDGDTLGGVVEVLAYGVPVGLGSHVHWDRKLDARLAGALMGIQAIKGVEIGDGFELARVPGSRAHDEIVGTPDGIRRVSGRSGGTEGGLTTGELLRVRAAMKPIATVPRALKTVDVATGEAAQAHHQRSDVSAVPAAGIVAEAMVALVLADAVAEKFGGDSVTETRRNVRSYLDNLDIR</sequence>
<protein>
    <recommendedName>
        <fullName evidence="1">Chorismate synthase</fullName>
        <shortName evidence="1">CS</shortName>
        <ecNumber evidence="1">4.2.3.5</ecNumber>
    </recommendedName>
    <alternativeName>
        <fullName evidence="1">5-enolpyruvylshikimate-3-phosphate phospholyase</fullName>
    </alternativeName>
</protein>
<keyword id="KW-0028">Amino-acid biosynthesis</keyword>
<keyword id="KW-0057">Aromatic amino acid biosynthesis</keyword>
<keyword id="KW-0274">FAD</keyword>
<keyword id="KW-0285">Flavoprotein</keyword>
<keyword id="KW-0288">FMN</keyword>
<keyword id="KW-0456">Lyase</keyword>
<keyword id="KW-0521">NADP</keyword>
<keyword id="KW-1185">Reference proteome</keyword>
<gene>
    <name evidence="1" type="primary">aroC</name>
    <name type="synonym">aroF</name>
    <name type="ordered locus">SCO1496</name>
    <name type="ORF">SC9C5.20c</name>
</gene>
<name>AROC_STRCO</name>
<comment type="function">
    <text evidence="1">Catalyzes the anti-1,4-elimination of the C-3 phosphate and the C-6 proR hydrogen from 5-enolpyruvylshikimate-3-phosphate (EPSP) to yield chorismate, which is the branch point compound that serves as the starting substrate for the three terminal pathways of aromatic amino acid biosynthesis. This reaction introduces a second double bond into the aromatic ring system.</text>
</comment>
<comment type="catalytic activity">
    <reaction evidence="1">
        <text>5-O-(1-carboxyvinyl)-3-phosphoshikimate = chorismate + phosphate</text>
        <dbReference type="Rhea" id="RHEA:21020"/>
        <dbReference type="ChEBI" id="CHEBI:29748"/>
        <dbReference type="ChEBI" id="CHEBI:43474"/>
        <dbReference type="ChEBI" id="CHEBI:57701"/>
        <dbReference type="EC" id="4.2.3.5"/>
    </reaction>
</comment>
<comment type="cofactor">
    <cofactor evidence="1">
        <name>FMNH2</name>
        <dbReference type="ChEBI" id="CHEBI:57618"/>
    </cofactor>
    <text evidence="1">Reduced FMN (FMNH(2)).</text>
</comment>
<comment type="pathway">
    <text evidence="1">Metabolic intermediate biosynthesis; chorismate biosynthesis; chorismate from D-erythrose 4-phosphate and phosphoenolpyruvate: step 7/7.</text>
</comment>
<comment type="subunit">
    <text evidence="1">Homotetramer.</text>
</comment>
<comment type="similarity">
    <text evidence="1">Belongs to the chorismate synthase family.</text>
</comment>
<feature type="chain" id="PRO_0000140653" description="Chorismate synthase">
    <location>
        <begin position="1"/>
        <end position="394"/>
    </location>
</feature>
<feature type="binding site" evidence="1">
    <location>
        <position position="42"/>
    </location>
    <ligand>
        <name>NADP(+)</name>
        <dbReference type="ChEBI" id="CHEBI:58349"/>
    </ligand>
</feature>
<feature type="binding site" evidence="1">
    <location>
        <position position="48"/>
    </location>
    <ligand>
        <name>NADP(+)</name>
        <dbReference type="ChEBI" id="CHEBI:58349"/>
    </ligand>
</feature>
<feature type="binding site" evidence="1">
    <location>
        <begin position="137"/>
        <end position="139"/>
    </location>
    <ligand>
        <name>FMN</name>
        <dbReference type="ChEBI" id="CHEBI:58210"/>
    </ligand>
</feature>
<feature type="binding site" evidence="1">
    <location>
        <begin position="258"/>
        <end position="259"/>
    </location>
    <ligand>
        <name>FMN</name>
        <dbReference type="ChEBI" id="CHEBI:58210"/>
    </ligand>
</feature>
<feature type="binding site" evidence="1">
    <location>
        <position position="302"/>
    </location>
    <ligand>
        <name>FMN</name>
        <dbReference type="ChEBI" id="CHEBI:58210"/>
    </ligand>
</feature>
<feature type="binding site" evidence="1">
    <location>
        <begin position="317"/>
        <end position="321"/>
    </location>
    <ligand>
        <name>FMN</name>
        <dbReference type="ChEBI" id="CHEBI:58210"/>
    </ligand>
</feature>
<feature type="binding site" evidence="1">
    <location>
        <position position="343"/>
    </location>
    <ligand>
        <name>FMN</name>
        <dbReference type="ChEBI" id="CHEBI:58210"/>
    </ligand>
</feature>
<dbReference type="EC" id="4.2.3.5" evidence="1"/>
<dbReference type="EMBL" id="AL939109">
    <property type="protein sequence ID" value="CAB93376.1"/>
    <property type="molecule type" value="Genomic_DNA"/>
</dbReference>
<dbReference type="RefSeq" id="NP_625776.1">
    <property type="nucleotide sequence ID" value="NC_003888.3"/>
</dbReference>
<dbReference type="RefSeq" id="WP_003977330.1">
    <property type="nucleotide sequence ID" value="NZ_VNID01000021.1"/>
</dbReference>
<dbReference type="SMR" id="Q9KXQ4"/>
<dbReference type="FunCoup" id="Q9KXQ4">
    <property type="interactions" value="352"/>
</dbReference>
<dbReference type="STRING" id="100226.gene:17759082"/>
<dbReference type="PaxDb" id="100226-SCO1496"/>
<dbReference type="GeneID" id="91387536"/>
<dbReference type="KEGG" id="sco:SCO1496"/>
<dbReference type="PATRIC" id="fig|100226.15.peg.1505"/>
<dbReference type="eggNOG" id="COG0082">
    <property type="taxonomic scope" value="Bacteria"/>
</dbReference>
<dbReference type="HOGENOM" id="CLU_034547_2_0_11"/>
<dbReference type="InParanoid" id="Q9KXQ4"/>
<dbReference type="OrthoDB" id="9771806at2"/>
<dbReference type="PhylomeDB" id="Q9KXQ4"/>
<dbReference type="UniPathway" id="UPA00053">
    <property type="reaction ID" value="UER00090"/>
</dbReference>
<dbReference type="Proteomes" id="UP000001973">
    <property type="component" value="Chromosome"/>
</dbReference>
<dbReference type="GO" id="GO:0005829">
    <property type="term" value="C:cytosol"/>
    <property type="evidence" value="ECO:0000318"/>
    <property type="project" value="GO_Central"/>
</dbReference>
<dbReference type="GO" id="GO:0004107">
    <property type="term" value="F:chorismate synthase activity"/>
    <property type="evidence" value="ECO:0000318"/>
    <property type="project" value="GO_Central"/>
</dbReference>
<dbReference type="GO" id="GO:0010181">
    <property type="term" value="F:FMN binding"/>
    <property type="evidence" value="ECO:0000318"/>
    <property type="project" value="GO_Central"/>
</dbReference>
<dbReference type="GO" id="GO:0008652">
    <property type="term" value="P:amino acid biosynthetic process"/>
    <property type="evidence" value="ECO:0007669"/>
    <property type="project" value="UniProtKB-KW"/>
</dbReference>
<dbReference type="GO" id="GO:0009073">
    <property type="term" value="P:aromatic amino acid family biosynthetic process"/>
    <property type="evidence" value="ECO:0000318"/>
    <property type="project" value="GO_Central"/>
</dbReference>
<dbReference type="GO" id="GO:0009423">
    <property type="term" value="P:chorismate biosynthetic process"/>
    <property type="evidence" value="ECO:0000318"/>
    <property type="project" value="GO_Central"/>
</dbReference>
<dbReference type="CDD" id="cd07304">
    <property type="entry name" value="Chorismate_synthase"/>
    <property type="match status" value="1"/>
</dbReference>
<dbReference type="FunFam" id="3.60.150.10:FF:000002">
    <property type="entry name" value="Chorismate synthase"/>
    <property type="match status" value="1"/>
</dbReference>
<dbReference type="Gene3D" id="3.60.150.10">
    <property type="entry name" value="Chorismate synthase AroC"/>
    <property type="match status" value="1"/>
</dbReference>
<dbReference type="HAMAP" id="MF_00300">
    <property type="entry name" value="Chorismate_synth"/>
    <property type="match status" value="1"/>
</dbReference>
<dbReference type="InterPro" id="IPR000453">
    <property type="entry name" value="Chorismate_synth"/>
</dbReference>
<dbReference type="InterPro" id="IPR035904">
    <property type="entry name" value="Chorismate_synth_AroC_sf"/>
</dbReference>
<dbReference type="InterPro" id="IPR020541">
    <property type="entry name" value="Chorismate_synthase_CS"/>
</dbReference>
<dbReference type="NCBIfam" id="TIGR00033">
    <property type="entry name" value="aroC"/>
    <property type="match status" value="1"/>
</dbReference>
<dbReference type="NCBIfam" id="NF003793">
    <property type="entry name" value="PRK05382.1"/>
    <property type="match status" value="1"/>
</dbReference>
<dbReference type="PANTHER" id="PTHR21085">
    <property type="entry name" value="CHORISMATE SYNTHASE"/>
    <property type="match status" value="1"/>
</dbReference>
<dbReference type="PANTHER" id="PTHR21085:SF0">
    <property type="entry name" value="CHORISMATE SYNTHASE"/>
    <property type="match status" value="1"/>
</dbReference>
<dbReference type="Pfam" id="PF01264">
    <property type="entry name" value="Chorismate_synt"/>
    <property type="match status" value="1"/>
</dbReference>
<dbReference type="PIRSF" id="PIRSF001456">
    <property type="entry name" value="Chorismate_synth"/>
    <property type="match status" value="1"/>
</dbReference>
<dbReference type="SUPFAM" id="SSF103263">
    <property type="entry name" value="Chorismate synthase, AroC"/>
    <property type="match status" value="1"/>
</dbReference>
<dbReference type="PROSITE" id="PS00787">
    <property type="entry name" value="CHORISMATE_SYNTHASE_1"/>
    <property type="match status" value="1"/>
</dbReference>
<dbReference type="PROSITE" id="PS00788">
    <property type="entry name" value="CHORISMATE_SYNTHASE_2"/>
    <property type="match status" value="1"/>
</dbReference>
<dbReference type="PROSITE" id="PS00789">
    <property type="entry name" value="CHORISMATE_SYNTHASE_3"/>
    <property type="match status" value="1"/>
</dbReference>
<accession>Q9KXQ4</accession>
<proteinExistence type="inferred from homology"/>
<organism>
    <name type="scientific">Streptomyces coelicolor (strain ATCC BAA-471 / A3(2) / M145)</name>
    <dbReference type="NCBI Taxonomy" id="100226"/>
    <lineage>
        <taxon>Bacteria</taxon>
        <taxon>Bacillati</taxon>
        <taxon>Actinomycetota</taxon>
        <taxon>Actinomycetes</taxon>
        <taxon>Kitasatosporales</taxon>
        <taxon>Streptomycetaceae</taxon>
        <taxon>Streptomyces</taxon>
        <taxon>Streptomyces albidoflavus group</taxon>
    </lineage>
</organism>
<reference key="1">
    <citation type="journal article" date="2002" name="Nature">
        <title>Complete genome sequence of the model actinomycete Streptomyces coelicolor A3(2).</title>
        <authorList>
            <person name="Bentley S.D."/>
            <person name="Chater K.F."/>
            <person name="Cerdeno-Tarraga A.-M."/>
            <person name="Challis G.L."/>
            <person name="Thomson N.R."/>
            <person name="James K.D."/>
            <person name="Harris D.E."/>
            <person name="Quail M.A."/>
            <person name="Kieser H."/>
            <person name="Harper D."/>
            <person name="Bateman A."/>
            <person name="Brown S."/>
            <person name="Chandra G."/>
            <person name="Chen C.W."/>
            <person name="Collins M."/>
            <person name="Cronin A."/>
            <person name="Fraser A."/>
            <person name="Goble A."/>
            <person name="Hidalgo J."/>
            <person name="Hornsby T."/>
            <person name="Howarth S."/>
            <person name="Huang C.-H."/>
            <person name="Kieser T."/>
            <person name="Larke L."/>
            <person name="Murphy L.D."/>
            <person name="Oliver K."/>
            <person name="O'Neil S."/>
            <person name="Rabbinowitsch E."/>
            <person name="Rajandream M.A."/>
            <person name="Rutherford K.M."/>
            <person name="Rutter S."/>
            <person name="Seeger K."/>
            <person name="Saunders D."/>
            <person name="Sharp S."/>
            <person name="Squares R."/>
            <person name="Squares S."/>
            <person name="Taylor K."/>
            <person name="Warren T."/>
            <person name="Wietzorrek A."/>
            <person name="Woodward J.R."/>
            <person name="Barrell B.G."/>
            <person name="Parkhill J."/>
            <person name="Hopwood D.A."/>
        </authorList>
    </citation>
    <scope>NUCLEOTIDE SEQUENCE [LARGE SCALE GENOMIC DNA]</scope>
    <source>
        <strain>ATCC BAA-471 / A3(2) / M145</strain>
    </source>
</reference>
<evidence type="ECO:0000255" key="1">
    <source>
        <dbReference type="HAMAP-Rule" id="MF_00300"/>
    </source>
</evidence>